<sequence>MKNINPTQTAAWQALQKHFDEMKDVTIADLFAKDGDRFSKFSATFGDQMLVDYSKNRITEETLAKLQDLAKECDLAGAIKSMFSGEKINRTENRAVLHVALRNRSNTPILVDGKDVMPEVNAVLEKMKTFSEAIISGEWKGYTGKAITDVVNIGIGGSDLGPYMVTEALRPYKNHLNMHFVSNVDGTHIAEVLKKVNPETTLFLVASKTFTTQETMTNAHSARDWFLKAAGDEKHVAKHFAALSTNAKAVGEFGIDTANMFEFWDWVGGRYSLWSAIGLSIVLSIGFDNFVELLSGAHAMDKHFSTTPAEKNLPVLLALIGIWYNNFFGAETEAILPYDQYMHRFAAYFQQGNMESNGKYVDRNGNVVDYQTGPIIWGEPGTNGQHAFYQLIHQGTKMVPCDFIAPAITHNPLSDHHQKLLSNFFAQTEALAFGKSREVVEQEYRDQGKDPATLDYVVPFKVFEGNRPTNSILLREITPFSLGALIALYEHKIFTQGVILNIFTFDQWGVELGKQLANRILPELKDGKEISSHDSSTNGLINRYKAWRG</sequence>
<accession>B6I5N7</accession>
<keyword id="KW-0007">Acetylation</keyword>
<keyword id="KW-0963">Cytoplasm</keyword>
<keyword id="KW-0312">Gluconeogenesis</keyword>
<keyword id="KW-0324">Glycolysis</keyword>
<keyword id="KW-0413">Isomerase</keyword>
<protein>
    <recommendedName>
        <fullName evidence="1">Glucose-6-phosphate isomerase</fullName>
        <shortName evidence="1">GPI</shortName>
        <ecNumber evidence="1">5.3.1.9</ecNumber>
    </recommendedName>
    <alternativeName>
        <fullName evidence="1">Phosphoglucose isomerase</fullName>
        <shortName evidence="1">PGI</shortName>
    </alternativeName>
    <alternativeName>
        <fullName evidence="1">Phosphohexose isomerase</fullName>
        <shortName evidence="1">PHI</shortName>
    </alternativeName>
</protein>
<gene>
    <name evidence="1" type="primary">pgi</name>
    <name type="ordered locus">ECSE_4314</name>
</gene>
<organism>
    <name type="scientific">Escherichia coli (strain SE11)</name>
    <dbReference type="NCBI Taxonomy" id="409438"/>
    <lineage>
        <taxon>Bacteria</taxon>
        <taxon>Pseudomonadati</taxon>
        <taxon>Pseudomonadota</taxon>
        <taxon>Gammaproteobacteria</taxon>
        <taxon>Enterobacterales</taxon>
        <taxon>Enterobacteriaceae</taxon>
        <taxon>Escherichia</taxon>
    </lineage>
</organism>
<name>G6PI_ECOSE</name>
<dbReference type="EC" id="5.3.1.9" evidence="1"/>
<dbReference type="EMBL" id="AP009240">
    <property type="protein sequence ID" value="BAG79838.1"/>
    <property type="molecule type" value="Genomic_DNA"/>
</dbReference>
<dbReference type="RefSeq" id="WP_000790010.1">
    <property type="nucleotide sequence ID" value="NC_011415.1"/>
</dbReference>
<dbReference type="SMR" id="B6I5N7"/>
<dbReference type="KEGG" id="ecy:ECSE_4314"/>
<dbReference type="HOGENOM" id="CLU_017947_3_1_6"/>
<dbReference type="UniPathway" id="UPA00109">
    <property type="reaction ID" value="UER00181"/>
</dbReference>
<dbReference type="UniPathway" id="UPA00138"/>
<dbReference type="Proteomes" id="UP000008199">
    <property type="component" value="Chromosome"/>
</dbReference>
<dbReference type="GO" id="GO:0005829">
    <property type="term" value="C:cytosol"/>
    <property type="evidence" value="ECO:0007669"/>
    <property type="project" value="TreeGrafter"/>
</dbReference>
<dbReference type="GO" id="GO:0097367">
    <property type="term" value="F:carbohydrate derivative binding"/>
    <property type="evidence" value="ECO:0007669"/>
    <property type="project" value="InterPro"/>
</dbReference>
<dbReference type="GO" id="GO:0004347">
    <property type="term" value="F:glucose-6-phosphate isomerase activity"/>
    <property type="evidence" value="ECO:0007669"/>
    <property type="project" value="UniProtKB-UniRule"/>
</dbReference>
<dbReference type="GO" id="GO:0048029">
    <property type="term" value="F:monosaccharide binding"/>
    <property type="evidence" value="ECO:0007669"/>
    <property type="project" value="TreeGrafter"/>
</dbReference>
<dbReference type="GO" id="GO:0006094">
    <property type="term" value="P:gluconeogenesis"/>
    <property type="evidence" value="ECO:0007669"/>
    <property type="project" value="UniProtKB-UniRule"/>
</dbReference>
<dbReference type="GO" id="GO:0051156">
    <property type="term" value="P:glucose 6-phosphate metabolic process"/>
    <property type="evidence" value="ECO:0007669"/>
    <property type="project" value="TreeGrafter"/>
</dbReference>
<dbReference type="GO" id="GO:0006096">
    <property type="term" value="P:glycolytic process"/>
    <property type="evidence" value="ECO:0007669"/>
    <property type="project" value="UniProtKB-UniRule"/>
</dbReference>
<dbReference type="CDD" id="cd05015">
    <property type="entry name" value="SIS_PGI_1"/>
    <property type="match status" value="1"/>
</dbReference>
<dbReference type="CDD" id="cd05016">
    <property type="entry name" value="SIS_PGI_2"/>
    <property type="match status" value="1"/>
</dbReference>
<dbReference type="FunFam" id="1.10.1390.10:FF:000001">
    <property type="entry name" value="Glucose-6-phosphate isomerase"/>
    <property type="match status" value="1"/>
</dbReference>
<dbReference type="FunFam" id="3.40.50.10490:FF:000004">
    <property type="entry name" value="Glucose-6-phosphate isomerase"/>
    <property type="match status" value="1"/>
</dbReference>
<dbReference type="Gene3D" id="1.10.1390.10">
    <property type="match status" value="1"/>
</dbReference>
<dbReference type="Gene3D" id="3.40.50.10490">
    <property type="entry name" value="Glucose-6-phosphate isomerase like protein, domain 1"/>
    <property type="match status" value="2"/>
</dbReference>
<dbReference type="HAMAP" id="MF_00473">
    <property type="entry name" value="G6P_isomerase"/>
    <property type="match status" value="1"/>
</dbReference>
<dbReference type="InterPro" id="IPR001672">
    <property type="entry name" value="G6P_Isomerase"/>
</dbReference>
<dbReference type="InterPro" id="IPR023096">
    <property type="entry name" value="G6P_Isomerase_C"/>
</dbReference>
<dbReference type="InterPro" id="IPR018189">
    <property type="entry name" value="Phosphoglucose_isomerase_CS"/>
</dbReference>
<dbReference type="InterPro" id="IPR046348">
    <property type="entry name" value="SIS_dom_sf"/>
</dbReference>
<dbReference type="InterPro" id="IPR035476">
    <property type="entry name" value="SIS_PGI_1"/>
</dbReference>
<dbReference type="InterPro" id="IPR035482">
    <property type="entry name" value="SIS_PGI_2"/>
</dbReference>
<dbReference type="NCBIfam" id="NF001211">
    <property type="entry name" value="PRK00179.1"/>
    <property type="match status" value="1"/>
</dbReference>
<dbReference type="PANTHER" id="PTHR11469">
    <property type="entry name" value="GLUCOSE-6-PHOSPHATE ISOMERASE"/>
    <property type="match status" value="1"/>
</dbReference>
<dbReference type="PANTHER" id="PTHR11469:SF1">
    <property type="entry name" value="GLUCOSE-6-PHOSPHATE ISOMERASE"/>
    <property type="match status" value="1"/>
</dbReference>
<dbReference type="Pfam" id="PF00342">
    <property type="entry name" value="PGI"/>
    <property type="match status" value="1"/>
</dbReference>
<dbReference type="PRINTS" id="PR00662">
    <property type="entry name" value="G6PISOMERASE"/>
</dbReference>
<dbReference type="SUPFAM" id="SSF53697">
    <property type="entry name" value="SIS domain"/>
    <property type="match status" value="1"/>
</dbReference>
<dbReference type="PROSITE" id="PS00765">
    <property type="entry name" value="P_GLUCOSE_ISOMERASE_1"/>
    <property type="match status" value="1"/>
</dbReference>
<dbReference type="PROSITE" id="PS00174">
    <property type="entry name" value="P_GLUCOSE_ISOMERASE_2"/>
    <property type="match status" value="1"/>
</dbReference>
<dbReference type="PROSITE" id="PS51463">
    <property type="entry name" value="P_GLUCOSE_ISOMERASE_3"/>
    <property type="match status" value="1"/>
</dbReference>
<feature type="chain" id="PRO_1000125722" description="Glucose-6-phosphate isomerase">
    <location>
        <begin position="1"/>
        <end position="549"/>
    </location>
</feature>
<feature type="active site" description="Proton donor" evidence="1">
    <location>
        <position position="355"/>
    </location>
</feature>
<feature type="active site" evidence="1">
    <location>
        <position position="386"/>
    </location>
</feature>
<feature type="active site" evidence="1">
    <location>
        <position position="514"/>
    </location>
</feature>
<feature type="modified residue" description="N6-acetyllysine" evidence="1">
    <location>
        <position position="80"/>
    </location>
</feature>
<feature type="modified residue" description="N6-acetyllysine" evidence="1">
    <location>
        <position position="228"/>
    </location>
</feature>
<feature type="modified residue" description="N6-acetyllysine" evidence="1">
    <location>
        <position position="234"/>
    </location>
</feature>
<evidence type="ECO:0000255" key="1">
    <source>
        <dbReference type="HAMAP-Rule" id="MF_00473"/>
    </source>
</evidence>
<reference key="1">
    <citation type="journal article" date="2008" name="DNA Res.">
        <title>Complete genome sequence and comparative analysis of the wild-type commensal Escherichia coli strain SE11 isolated from a healthy adult.</title>
        <authorList>
            <person name="Oshima K."/>
            <person name="Toh H."/>
            <person name="Ogura Y."/>
            <person name="Sasamoto H."/>
            <person name="Morita H."/>
            <person name="Park S.-H."/>
            <person name="Ooka T."/>
            <person name="Iyoda S."/>
            <person name="Taylor T.D."/>
            <person name="Hayashi T."/>
            <person name="Itoh K."/>
            <person name="Hattori M."/>
        </authorList>
    </citation>
    <scope>NUCLEOTIDE SEQUENCE [LARGE SCALE GENOMIC DNA]</scope>
    <source>
        <strain>SE11</strain>
    </source>
</reference>
<comment type="function">
    <text evidence="1">Catalyzes the reversible isomerization of glucose-6-phosphate to fructose-6-phosphate.</text>
</comment>
<comment type="catalytic activity">
    <reaction evidence="1">
        <text>alpha-D-glucose 6-phosphate = beta-D-fructose 6-phosphate</text>
        <dbReference type="Rhea" id="RHEA:11816"/>
        <dbReference type="ChEBI" id="CHEBI:57634"/>
        <dbReference type="ChEBI" id="CHEBI:58225"/>
        <dbReference type="EC" id="5.3.1.9"/>
    </reaction>
</comment>
<comment type="pathway">
    <text evidence="1">Carbohydrate biosynthesis; gluconeogenesis.</text>
</comment>
<comment type="pathway">
    <text evidence="1">Carbohydrate degradation; glycolysis; D-glyceraldehyde 3-phosphate and glycerone phosphate from D-glucose: step 2/4.</text>
</comment>
<comment type="subcellular location">
    <subcellularLocation>
        <location evidence="1">Cytoplasm</location>
    </subcellularLocation>
</comment>
<comment type="similarity">
    <text evidence="1">Belongs to the GPI family.</text>
</comment>
<proteinExistence type="inferred from homology"/>